<dbReference type="EMBL" id="AE017143">
    <property type="protein sequence ID" value="AAP95874.1"/>
    <property type="molecule type" value="Genomic_DNA"/>
</dbReference>
<dbReference type="RefSeq" id="WP_010944924.1">
    <property type="nucleotide sequence ID" value="NC_002940.2"/>
</dbReference>
<dbReference type="SMR" id="Q7VMI2"/>
<dbReference type="STRING" id="233412.HD_0995"/>
<dbReference type="KEGG" id="hdu:HD_0995"/>
<dbReference type="eggNOG" id="COG0012">
    <property type="taxonomic scope" value="Bacteria"/>
</dbReference>
<dbReference type="HOGENOM" id="CLU_018395_0_1_6"/>
<dbReference type="OrthoDB" id="9810373at2"/>
<dbReference type="Proteomes" id="UP000001022">
    <property type="component" value="Chromosome"/>
</dbReference>
<dbReference type="GO" id="GO:0005737">
    <property type="term" value="C:cytoplasm"/>
    <property type="evidence" value="ECO:0007669"/>
    <property type="project" value="TreeGrafter"/>
</dbReference>
<dbReference type="GO" id="GO:0005524">
    <property type="term" value="F:ATP binding"/>
    <property type="evidence" value="ECO:0007669"/>
    <property type="project" value="UniProtKB-UniRule"/>
</dbReference>
<dbReference type="GO" id="GO:0016887">
    <property type="term" value="F:ATP hydrolysis activity"/>
    <property type="evidence" value="ECO:0007669"/>
    <property type="project" value="UniProtKB-UniRule"/>
</dbReference>
<dbReference type="GO" id="GO:0005525">
    <property type="term" value="F:GTP binding"/>
    <property type="evidence" value="ECO:0007669"/>
    <property type="project" value="InterPro"/>
</dbReference>
<dbReference type="GO" id="GO:0046872">
    <property type="term" value="F:metal ion binding"/>
    <property type="evidence" value="ECO:0007669"/>
    <property type="project" value="UniProtKB-KW"/>
</dbReference>
<dbReference type="GO" id="GO:0043023">
    <property type="term" value="F:ribosomal large subunit binding"/>
    <property type="evidence" value="ECO:0007669"/>
    <property type="project" value="UniProtKB-UniRule"/>
</dbReference>
<dbReference type="CDD" id="cd04867">
    <property type="entry name" value="TGS_YchF_OLA1"/>
    <property type="match status" value="1"/>
</dbReference>
<dbReference type="CDD" id="cd01900">
    <property type="entry name" value="YchF"/>
    <property type="match status" value="1"/>
</dbReference>
<dbReference type="FunFam" id="1.10.150.300:FF:000002">
    <property type="entry name" value="Ribosome-binding ATPase YchF"/>
    <property type="match status" value="1"/>
</dbReference>
<dbReference type="FunFam" id="3.10.20.30:FF:000001">
    <property type="entry name" value="Ribosome-binding ATPase YchF"/>
    <property type="match status" value="1"/>
</dbReference>
<dbReference type="Gene3D" id="3.10.20.30">
    <property type="match status" value="1"/>
</dbReference>
<dbReference type="Gene3D" id="3.40.50.300">
    <property type="entry name" value="P-loop containing nucleotide triphosphate hydrolases"/>
    <property type="match status" value="1"/>
</dbReference>
<dbReference type="Gene3D" id="1.10.150.300">
    <property type="entry name" value="TGS-like domain"/>
    <property type="match status" value="1"/>
</dbReference>
<dbReference type="HAMAP" id="MF_00944">
    <property type="entry name" value="YchF_OLA1_ATPase"/>
    <property type="match status" value="1"/>
</dbReference>
<dbReference type="InterPro" id="IPR004396">
    <property type="entry name" value="ATPase_YchF/OLA1"/>
</dbReference>
<dbReference type="InterPro" id="IPR012675">
    <property type="entry name" value="Beta-grasp_dom_sf"/>
</dbReference>
<dbReference type="InterPro" id="IPR031167">
    <property type="entry name" value="G_OBG"/>
</dbReference>
<dbReference type="InterPro" id="IPR006073">
    <property type="entry name" value="GTP-bd"/>
</dbReference>
<dbReference type="InterPro" id="IPR027417">
    <property type="entry name" value="P-loop_NTPase"/>
</dbReference>
<dbReference type="InterPro" id="IPR004095">
    <property type="entry name" value="TGS"/>
</dbReference>
<dbReference type="InterPro" id="IPR012676">
    <property type="entry name" value="TGS-like"/>
</dbReference>
<dbReference type="InterPro" id="IPR023192">
    <property type="entry name" value="TGS-like_dom_sf"/>
</dbReference>
<dbReference type="InterPro" id="IPR013029">
    <property type="entry name" value="YchF_C"/>
</dbReference>
<dbReference type="InterPro" id="IPR041706">
    <property type="entry name" value="YchF_N"/>
</dbReference>
<dbReference type="NCBIfam" id="TIGR00092">
    <property type="entry name" value="redox-regulated ATPase YchF"/>
    <property type="match status" value="1"/>
</dbReference>
<dbReference type="PANTHER" id="PTHR23305">
    <property type="entry name" value="OBG GTPASE FAMILY"/>
    <property type="match status" value="1"/>
</dbReference>
<dbReference type="PANTHER" id="PTHR23305:SF18">
    <property type="entry name" value="OBG-TYPE G DOMAIN-CONTAINING PROTEIN"/>
    <property type="match status" value="1"/>
</dbReference>
<dbReference type="Pfam" id="PF01926">
    <property type="entry name" value="MMR_HSR1"/>
    <property type="match status" value="1"/>
</dbReference>
<dbReference type="Pfam" id="PF06071">
    <property type="entry name" value="YchF-GTPase_C"/>
    <property type="match status" value="1"/>
</dbReference>
<dbReference type="PIRSF" id="PIRSF006641">
    <property type="entry name" value="CHP00092"/>
    <property type="match status" value="1"/>
</dbReference>
<dbReference type="PRINTS" id="PR00326">
    <property type="entry name" value="GTP1OBG"/>
</dbReference>
<dbReference type="SUPFAM" id="SSF52540">
    <property type="entry name" value="P-loop containing nucleoside triphosphate hydrolases"/>
    <property type="match status" value="1"/>
</dbReference>
<dbReference type="SUPFAM" id="SSF81271">
    <property type="entry name" value="TGS-like"/>
    <property type="match status" value="1"/>
</dbReference>
<dbReference type="PROSITE" id="PS51710">
    <property type="entry name" value="G_OBG"/>
    <property type="match status" value="1"/>
</dbReference>
<dbReference type="PROSITE" id="PS51880">
    <property type="entry name" value="TGS"/>
    <property type="match status" value="1"/>
</dbReference>
<gene>
    <name evidence="2" type="primary">ychF</name>
    <name type="synonym">engD</name>
    <name type="ordered locus">HD_0995</name>
</gene>
<reference key="1">
    <citation type="submission" date="2003-06" db="EMBL/GenBank/DDBJ databases">
        <title>The complete genome sequence of Haemophilus ducreyi.</title>
        <authorList>
            <person name="Munson R.S. Jr."/>
            <person name="Ray W.C."/>
            <person name="Mahairas G."/>
            <person name="Sabo P."/>
            <person name="Mungur R."/>
            <person name="Johnson L."/>
            <person name="Nguyen D."/>
            <person name="Wang J."/>
            <person name="Forst C."/>
            <person name="Hood L."/>
        </authorList>
    </citation>
    <scope>NUCLEOTIDE SEQUENCE [LARGE SCALE GENOMIC DNA]</scope>
    <source>
        <strain>35000HP / ATCC 700724</strain>
    </source>
</reference>
<sequence length="363" mass="39826">MGFKCGIVGLPNVGKSTLFNALTKAGIEAANYPFCTIEPNTGVVPMPDPRLDALAEIVNPERVLPTTMEFVDIAGLVAGASKGEGLGNKFLANIRETDAIGHVVRCFENDDIVHVAGKIDPADDIETINTELALADLDSCERAIQRLQKRAKSGDKDAKFELSILEKILPVLENAGMIRSVALDKDELHAIKGYNFLTLKPTMYIANVNEDSFENNPYLDRVRQLAEQEGAVVVPVCAAIEAEIAELEDEEKVDFLQDLGIEEPGLNRVIRAGYRLLNLQTYFTAGVKEVRAWTVAVGATAPKAAAVIHTDFEKGFIRAEVIAYDDFIQFKGENGAKEAGKWRLEGKDYIVQDGDVMHFRFNV</sequence>
<protein>
    <recommendedName>
        <fullName evidence="2">Ribosome-binding ATPase YchF</fullName>
    </recommendedName>
</protein>
<keyword id="KW-0067">ATP-binding</keyword>
<keyword id="KW-0460">Magnesium</keyword>
<keyword id="KW-0479">Metal-binding</keyword>
<keyword id="KW-0547">Nucleotide-binding</keyword>
<keyword id="KW-1185">Reference proteome</keyword>
<organism>
    <name type="scientific">Haemophilus ducreyi (strain 35000HP / ATCC 700724)</name>
    <dbReference type="NCBI Taxonomy" id="233412"/>
    <lineage>
        <taxon>Bacteria</taxon>
        <taxon>Pseudomonadati</taxon>
        <taxon>Pseudomonadota</taxon>
        <taxon>Gammaproteobacteria</taxon>
        <taxon>Pasteurellales</taxon>
        <taxon>Pasteurellaceae</taxon>
        <taxon>Haemophilus</taxon>
    </lineage>
</organism>
<accession>Q7VMI2</accession>
<feature type="initiator methionine" description="Removed" evidence="1">
    <location>
        <position position="1"/>
    </location>
</feature>
<feature type="chain" id="PRO_0000201677" description="Ribosome-binding ATPase YchF">
    <location>
        <begin position="2"/>
        <end position="363"/>
    </location>
</feature>
<feature type="domain" description="OBG-type G">
    <location>
        <begin position="3"/>
        <end position="256"/>
    </location>
</feature>
<feature type="domain" description="TGS" evidence="3">
    <location>
        <begin position="278"/>
        <end position="361"/>
    </location>
</feature>
<feature type="binding site" evidence="2">
    <location>
        <begin position="12"/>
        <end position="17"/>
    </location>
    <ligand>
        <name>ATP</name>
        <dbReference type="ChEBI" id="CHEBI:30616"/>
    </ligand>
</feature>
<feature type="binding site" evidence="1">
    <location>
        <position position="16"/>
    </location>
    <ligand>
        <name>Mg(2+)</name>
        <dbReference type="ChEBI" id="CHEBI:18420"/>
    </ligand>
</feature>
<feature type="binding site" evidence="1">
    <location>
        <position position="36"/>
    </location>
    <ligand>
        <name>Mg(2+)</name>
        <dbReference type="ChEBI" id="CHEBI:18420"/>
    </ligand>
</feature>
<comment type="function">
    <text evidence="2">ATPase that binds to both the 70S ribosome and the 50S ribosomal subunit in a nucleotide-independent manner.</text>
</comment>
<comment type="cofactor">
    <cofactor evidence="1">
        <name>Mg(2+)</name>
        <dbReference type="ChEBI" id="CHEBI:18420"/>
    </cofactor>
</comment>
<comment type="similarity">
    <text evidence="2">Belongs to the TRAFAC class OBG-HflX-like GTPase superfamily. OBG GTPase family. YchF/OLA1 subfamily.</text>
</comment>
<evidence type="ECO:0000250" key="1"/>
<evidence type="ECO:0000255" key="2">
    <source>
        <dbReference type="HAMAP-Rule" id="MF_00944"/>
    </source>
</evidence>
<evidence type="ECO:0000255" key="3">
    <source>
        <dbReference type="PROSITE-ProRule" id="PRU01228"/>
    </source>
</evidence>
<proteinExistence type="inferred from homology"/>
<name>YCHF_HAEDU</name>